<reference key="1">
    <citation type="journal article" date="2008" name="PLoS Genet.">
        <title>Complete genome sequence of the complex carbohydrate-degrading marine bacterium, Saccharophagus degradans strain 2-40 T.</title>
        <authorList>
            <person name="Weiner R.M."/>
            <person name="Taylor L.E. II"/>
            <person name="Henrissat B."/>
            <person name="Hauser L."/>
            <person name="Land M."/>
            <person name="Coutinho P.M."/>
            <person name="Rancurel C."/>
            <person name="Saunders E.H."/>
            <person name="Longmire A.G."/>
            <person name="Zhang H."/>
            <person name="Bayer E.A."/>
            <person name="Gilbert H.J."/>
            <person name="Larimer F."/>
            <person name="Zhulin I.B."/>
            <person name="Ekborg N.A."/>
            <person name="Lamed R."/>
            <person name="Richardson P.M."/>
            <person name="Borovok I."/>
            <person name="Hutcheson S."/>
        </authorList>
    </citation>
    <scope>NUCLEOTIDE SEQUENCE [LARGE SCALE GENOMIC DNA]</scope>
    <source>
        <strain>2-40 / ATCC 43961 / DSM 17024</strain>
    </source>
</reference>
<comment type="function">
    <text evidence="1">Catalyzes the condensation of carbamoyl phosphate and aspartate to form carbamoyl aspartate and inorganic phosphate, the committed step in the de novo pyrimidine nucleotide biosynthesis pathway.</text>
</comment>
<comment type="catalytic activity">
    <reaction evidence="1">
        <text>carbamoyl phosphate + L-aspartate = N-carbamoyl-L-aspartate + phosphate + H(+)</text>
        <dbReference type="Rhea" id="RHEA:20013"/>
        <dbReference type="ChEBI" id="CHEBI:15378"/>
        <dbReference type="ChEBI" id="CHEBI:29991"/>
        <dbReference type="ChEBI" id="CHEBI:32814"/>
        <dbReference type="ChEBI" id="CHEBI:43474"/>
        <dbReference type="ChEBI" id="CHEBI:58228"/>
        <dbReference type="EC" id="2.1.3.2"/>
    </reaction>
</comment>
<comment type="pathway">
    <text evidence="1">Pyrimidine metabolism; UMP biosynthesis via de novo pathway; (S)-dihydroorotate from bicarbonate: step 2/3.</text>
</comment>
<comment type="subunit">
    <text evidence="1">Heterododecamer (2C3:3R2) of six catalytic PyrB chains organized as two trimers (C3), and six regulatory PyrI chains organized as three dimers (R2).</text>
</comment>
<comment type="similarity">
    <text evidence="1">Belongs to the aspartate/ornithine carbamoyltransferase superfamily. ATCase family.</text>
</comment>
<dbReference type="EC" id="2.1.3.2" evidence="1"/>
<dbReference type="EMBL" id="CP000282">
    <property type="protein sequence ID" value="ABD81645.1"/>
    <property type="molecule type" value="Genomic_DNA"/>
</dbReference>
<dbReference type="RefSeq" id="WP_011468862.1">
    <property type="nucleotide sequence ID" value="NC_007912.1"/>
</dbReference>
<dbReference type="SMR" id="Q21I34"/>
<dbReference type="STRING" id="203122.Sde_2385"/>
<dbReference type="GeneID" id="98614049"/>
<dbReference type="KEGG" id="sde:Sde_2385"/>
<dbReference type="eggNOG" id="COG0540">
    <property type="taxonomic scope" value="Bacteria"/>
</dbReference>
<dbReference type="HOGENOM" id="CLU_043846_1_2_6"/>
<dbReference type="OrthoDB" id="9774690at2"/>
<dbReference type="UniPathway" id="UPA00070">
    <property type="reaction ID" value="UER00116"/>
</dbReference>
<dbReference type="Proteomes" id="UP000001947">
    <property type="component" value="Chromosome"/>
</dbReference>
<dbReference type="GO" id="GO:0005829">
    <property type="term" value="C:cytosol"/>
    <property type="evidence" value="ECO:0007669"/>
    <property type="project" value="TreeGrafter"/>
</dbReference>
<dbReference type="GO" id="GO:0016597">
    <property type="term" value="F:amino acid binding"/>
    <property type="evidence" value="ECO:0007669"/>
    <property type="project" value="InterPro"/>
</dbReference>
<dbReference type="GO" id="GO:0004070">
    <property type="term" value="F:aspartate carbamoyltransferase activity"/>
    <property type="evidence" value="ECO:0007669"/>
    <property type="project" value="UniProtKB-UniRule"/>
</dbReference>
<dbReference type="GO" id="GO:0006207">
    <property type="term" value="P:'de novo' pyrimidine nucleobase biosynthetic process"/>
    <property type="evidence" value="ECO:0007669"/>
    <property type="project" value="InterPro"/>
</dbReference>
<dbReference type="GO" id="GO:0044205">
    <property type="term" value="P:'de novo' UMP biosynthetic process"/>
    <property type="evidence" value="ECO:0007669"/>
    <property type="project" value="UniProtKB-UniRule"/>
</dbReference>
<dbReference type="GO" id="GO:0006520">
    <property type="term" value="P:amino acid metabolic process"/>
    <property type="evidence" value="ECO:0007669"/>
    <property type="project" value="InterPro"/>
</dbReference>
<dbReference type="Gene3D" id="3.40.50.1370">
    <property type="entry name" value="Aspartate/ornithine carbamoyltransferase"/>
    <property type="match status" value="2"/>
</dbReference>
<dbReference type="HAMAP" id="MF_00001">
    <property type="entry name" value="Asp_carb_tr"/>
    <property type="match status" value="1"/>
</dbReference>
<dbReference type="InterPro" id="IPR006132">
    <property type="entry name" value="Asp/Orn_carbamoyltranf_P-bd"/>
</dbReference>
<dbReference type="InterPro" id="IPR006130">
    <property type="entry name" value="Asp/Orn_carbamoylTrfase"/>
</dbReference>
<dbReference type="InterPro" id="IPR036901">
    <property type="entry name" value="Asp/Orn_carbamoylTrfase_sf"/>
</dbReference>
<dbReference type="InterPro" id="IPR002082">
    <property type="entry name" value="Asp_carbamoyltransf"/>
</dbReference>
<dbReference type="InterPro" id="IPR006131">
    <property type="entry name" value="Asp_carbamoyltransf_Asp/Orn-bd"/>
</dbReference>
<dbReference type="NCBIfam" id="TIGR00670">
    <property type="entry name" value="asp_carb_tr"/>
    <property type="match status" value="1"/>
</dbReference>
<dbReference type="NCBIfam" id="NF002032">
    <property type="entry name" value="PRK00856.1"/>
    <property type="match status" value="1"/>
</dbReference>
<dbReference type="NCBIfam" id="NF006046">
    <property type="entry name" value="PRK08192.1"/>
    <property type="match status" value="1"/>
</dbReference>
<dbReference type="PANTHER" id="PTHR45753:SF6">
    <property type="entry name" value="ASPARTATE CARBAMOYLTRANSFERASE"/>
    <property type="match status" value="1"/>
</dbReference>
<dbReference type="PANTHER" id="PTHR45753">
    <property type="entry name" value="ORNITHINE CARBAMOYLTRANSFERASE, MITOCHONDRIAL"/>
    <property type="match status" value="1"/>
</dbReference>
<dbReference type="Pfam" id="PF00185">
    <property type="entry name" value="OTCace"/>
    <property type="match status" value="1"/>
</dbReference>
<dbReference type="Pfam" id="PF02729">
    <property type="entry name" value="OTCace_N"/>
    <property type="match status" value="1"/>
</dbReference>
<dbReference type="PRINTS" id="PR00100">
    <property type="entry name" value="AOTCASE"/>
</dbReference>
<dbReference type="PRINTS" id="PR00101">
    <property type="entry name" value="ATCASE"/>
</dbReference>
<dbReference type="SUPFAM" id="SSF53671">
    <property type="entry name" value="Aspartate/ornithine carbamoyltransferase"/>
    <property type="match status" value="1"/>
</dbReference>
<dbReference type="PROSITE" id="PS00097">
    <property type="entry name" value="CARBAMOYLTRANSFERASE"/>
    <property type="match status" value="1"/>
</dbReference>
<name>PYRB_SACD2</name>
<accession>Q21I34</accession>
<feature type="chain" id="PRO_0000321156" description="Aspartate carbamoyltransferase catalytic subunit">
    <location>
        <begin position="1"/>
        <end position="337"/>
    </location>
</feature>
<feature type="binding site" evidence="1">
    <location>
        <position position="57"/>
    </location>
    <ligand>
        <name>carbamoyl phosphate</name>
        <dbReference type="ChEBI" id="CHEBI:58228"/>
    </ligand>
</feature>
<feature type="binding site" evidence="1">
    <location>
        <position position="58"/>
    </location>
    <ligand>
        <name>carbamoyl phosphate</name>
        <dbReference type="ChEBI" id="CHEBI:58228"/>
    </ligand>
</feature>
<feature type="binding site" evidence="1">
    <location>
        <position position="86"/>
    </location>
    <ligand>
        <name>L-aspartate</name>
        <dbReference type="ChEBI" id="CHEBI:29991"/>
    </ligand>
</feature>
<feature type="binding site" evidence="1">
    <location>
        <position position="107"/>
    </location>
    <ligand>
        <name>carbamoyl phosphate</name>
        <dbReference type="ChEBI" id="CHEBI:58228"/>
    </ligand>
</feature>
<feature type="binding site" evidence="1">
    <location>
        <position position="135"/>
    </location>
    <ligand>
        <name>carbamoyl phosphate</name>
        <dbReference type="ChEBI" id="CHEBI:58228"/>
    </ligand>
</feature>
<feature type="binding site" evidence="1">
    <location>
        <position position="138"/>
    </location>
    <ligand>
        <name>carbamoyl phosphate</name>
        <dbReference type="ChEBI" id="CHEBI:58228"/>
    </ligand>
</feature>
<feature type="binding site" evidence="1">
    <location>
        <position position="172"/>
    </location>
    <ligand>
        <name>L-aspartate</name>
        <dbReference type="ChEBI" id="CHEBI:29991"/>
    </ligand>
</feature>
<feature type="binding site" evidence="1">
    <location>
        <position position="234"/>
    </location>
    <ligand>
        <name>L-aspartate</name>
        <dbReference type="ChEBI" id="CHEBI:29991"/>
    </ligand>
</feature>
<feature type="binding site" evidence="1">
    <location>
        <position position="274"/>
    </location>
    <ligand>
        <name>carbamoyl phosphate</name>
        <dbReference type="ChEBI" id="CHEBI:58228"/>
    </ligand>
</feature>
<feature type="binding site" evidence="1">
    <location>
        <position position="275"/>
    </location>
    <ligand>
        <name>carbamoyl phosphate</name>
        <dbReference type="ChEBI" id="CHEBI:58228"/>
    </ligand>
</feature>
<evidence type="ECO:0000255" key="1">
    <source>
        <dbReference type="HAMAP-Rule" id="MF_00001"/>
    </source>
</evidence>
<protein>
    <recommendedName>
        <fullName evidence="1">Aspartate carbamoyltransferase catalytic subunit</fullName>
        <ecNumber evidence="1">2.1.3.2</ecNumber>
    </recommendedName>
    <alternativeName>
        <fullName evidence="1">Aspartate transcarbamylase</fullName>
        <shortName evidence="1">ATCase</shortName>
    </alternativeName>
</protein>
<gene>
    <name evidence="1" type="primary">pyrB</name>
    <name type="ordered locus">Sde_2385</name>
</gene>
<organism>
    <name type="scientific">Saccharophagus degradans (strain 2-40 / ATCC 43961 / DSM 17024)</name>
    <dbReference type="NCBI Taxonomy" id="203122"/>
    <lineage>
        <taxon>Bacteria</taxon>
        <taxon>Pseudomonadati</taxon>
        <taxon>Pseudomonadota</taxon>
        <taxon>Gammaproteobacteria</taxon>
        <taxon>Cellvibrionales</taxon>
        <taxon>Cellvibrionaceae</taxon>
        <taxon>Saccharophagus</taxon>
    </lineage>
</organism>
<keyword id="KW-0665">Pyrimidine biosynthesis</keyword>
<keyword id="KW-1185">Reference proteome</keyword>
<keyword id="KW-0808">Transferase</keyword>
<proteinExistence type="inferred from homology"/>
<sequence>MKFSGSHILSVEQFERADIERIFAVADSMEPYALRQKVTRVLEGAILGNMFFEPSTRTRVSFGCAFNLLGGEVRETTGFKSSAIAKGESLYDTARVLSGYSDVICMRHPQEGSVAEFAQASRVPVINGGDGANEHPSQALLDLYTIQKELRDKGRSLDGLRIAMIGDLKHGRTVHSLMRLLGLFANLQVVLVSPEELAMPEEYVELLRGLGHRVDVSSDLANSIGHVDIVYSTRIQEERFGSKEEADLYRGRFRLNQAIYTQFCEPNTVIMHPLPRDSRSDANELDNDLNQNPNLAIFRQTDNGILVRMALFALILDVADQVDKFSRPVNWYHSRTF</sequence>